<protein>
    <recommendedName>
        <fullName evidence="3">Hydroxypyruvate/pyruvate aldolase</fullName>
        <shortName evidence="3">HPA/PA aldolase</shortName>
        <ecNumber evidence="2">4.1.2.-</ecNumber>
    </recommendedName>
</protein>
<reference evidence="5" key="1">
    <citation type="journal article" date="2017" name="Green Chem.">
        <title>Expanding the reaction space of aldolases using hydroxypyruvate as a nucleophilic substrate.</title>
        <authorList>
            <person name="de Berardinis V."/>
            <person name="Guerard-Helaine C."/>
            <person name="Darii E."/>
            <person name="Bastard K."/>
            <person name="Helaine V."/>
            <person name="Mariage A."/>
            <person name="Petit J.-L."/>
            <person name="Poupard N."/>
            <person name="Sanchez-Moreno I."/>
            <person name="Stam M."/>
            <person name="Gefflaut T."/>
            <person name="Salanoubat M."/>
            <person name="Lemaire M."/>
        </authorList>
    </citation>
    <scope>NUCLEOTIDE SEQUENCE [GENOMIC DNA]</scope>
    <scope>FUNCTION</scope>
    <scope>CATALYTIC ACTIVITY</scope>
    <scope>COFACTOR</scope>
</reference>
<reference evidence="6" key="2">
    <citation type="submission" date="2015-06" db="EMBL/GenBank/DDBJ databases">
        <authorList>
            <person name="Radhakrishnan R."/>
            <person name="Underwood A."/>
            <person name="Al-Shahib A."/>
        </authorList>
    </citation>
    <scope>NUCLEOTIDE SEQUENCE [LARGE SCALE GENOMIC DNA]</scope>
    <source>
        <strain>P19_London_7_VIM_2_05_10</strain>
    </source>
</reference>
<reference evidence="7" key="3">
    <citation type="submission" date="2017-08" db="EMBL/GenBank/DDBJ databases">
        <authorList>
            <person name="Feschi L."/>
            <person name="Jeukens J."/>
            <person name="Emond-Rheault J.-G."/>
            <person name="Kukavica-Ibrulj I."/>
            <person name="Boyle B."/>
            <person name="Levesque R.C."/>
        </authorList>
    </citation>
    <scope>NUCLEOTIDE SEQUENCE [LARGE SCALE GENOMIC DNA]</scope>
    <source>
        <strain>PA-W36</strain>
    </source>
</reference>
<reference evidence="8" key="4">
    <citation type="submission" date="2021-08" db="PDB data bank">
        <title>Biochemical and Molecular Characterization of Pyruvate Aldolase for the Synthesis of 2-Keto-4-hydroxybutyrate.</title>
        <authorList>
            <person name="Jeong Y.J."/>
            <person name="Le T.K."/>
            <person name="Seo P.W."/>
            <person name="Ju S.B."/>
            <person name="Kim J.S."/>
            <person name="Yeom S.J."/>
        </authorList>
    </citation>
    <scope>X-RAY CRYSTALLOGRAPHY (2.48 ANGSTROMS)</scope>
</reference>
<dbReference type="EC" id="4.1.2.-" evidence="2"/>
<dbReference type="EMBL" id="LN811419">
    <property type="protein sequence ID" value="CEP14691.1"/>
    <property type="molecule type" value="Genomic_DNA"/>
</dbReference>
<dbReference type="EMBL" id="CVVU01000088">
    <property type="protein sequence ID" value="CRO41772.1"/>
    <property type="molecule type" value="Genomic_DNA"/>
</dbReference>
<dbReference type="EMBL" id="NSNE01000017">
    <property type="protein sequence ID" value="RPM09126.1"/>
    <property type="molecule type" value="Genomic_DNA"/>
</dbReference>
<dbReference type="PDB" id="7V8T">
    <property type="method" value="X-ray"/>
    <property type="resolution" value="2.48 A"/>
    <property type="chains" value="A/B/C/D/E/F=1-268"/>
</dbReference>
<dbReference type="PDBsum" id="7V8T"/>
<dbReference type="SMR" id="A0A081HJP9"/>
<dbReference type="PATRIC" id="fig|287.1481.peg.3337"/>
<dbReference type="OMA" id="WNRVDDY"/>
<dbReference type="Proteomes" id="UP000045039">
    <property type="component" value="Unassembled WGS sequence"/>
</dbReference>
<dbReference type="Proteomes" id="UP000284767">
    <property type="component" value="Unassembled WGS sequence"/>
</dbReference>
<dbReference type="GO" id="GO:0005737">
    <property type="term" value="C:cytoplasm"/>
    <property type="evidence" value="ECO:0007669"/>
    <property type="project" value="TreeGrafter"/>
</dbReference>
<dbReference type="GO" id="GO:0016832">
    <property type="term" value="F:aldehyde-lyase activity"/>
    <property type="evidence" value="ECO:0007669"/>
    <property type="project" value="TreeGrafter"/>
</dbReference>
<dbReference type="GO" id="GO:0046872">
    <property type="term" value="F:metal ion binding"/>
    <property type="evidence" value="ECO:0007669"/>
    <property type="project" value="UniProtKB-KW"/>
</dbReference>
<dbReference type="GO" id="GO:0010124">
    <property type="term" value="P:phenylacetate catabolic process"/>
    <property type="evidence" value="ECO:0007669"/>
    <property type="project" value="InterPro"/>
</dbReference>
<dbReference type="FunFam" id="3.20.20.60:FF:000004">
    <property type="entry name" value="5-keto-4-deoxy-D-glucarate aldolase"/>
    <property type="match status" value="1"/>
</dbReference>
<dbReference type="Gene3D" id="3.20.20.60">
    <property type="entry name" value="Phosphoenolpyruvate-binding domains"/>
    <property type="match status" value="1"/>
</dbReference>
<dbReference type="InterPro" id="IPR005000">
    <property type="entry name" value="Aldolase/citrate-lyase_domain"/>
</dbReference>
<dbReference type="InterPro" id="IPR012689">
    <property type="entry name" value="HpaI"/>
</dbReference>
<dbReference type="InterPro" id="IPR050251">
    <property type="entry name" value="HpcH-HpaI_aldolase"/>
</dbReference>
<dbReference type="InterPro" id="IPR015813">
    <property type="entry name" value="Pyrv/PenolPyrv_kinase-like_dom"/>
</dbReference>
<dbReference type="InterPro" id="IPR040442">
    <property type="entry name" value="Pyrv_kinase-like_dom_sf"/>
</dbReference>
<dbReference type="NCBIfam" id="TIGR02311">
    <property type="entry name" value="HpaI"/>
    <property type="match status" value="1"/>
</dbReference>
<dbReference type="PANTHER" id="PTHR30502">
    <property type="entry name" value="2-KETO-3-DEOXY-L-RHAMNONATE ALDOLASE"/>
    <property type="match status" value="1"/>
</dbReference>
<dbReference type="PANTHER" id="PTHR30502:SF0">
    <property type="entry name" value="PHOSPHOENOLPYRUVATE CARBOXYLASE FAMILY PROTEIN"/>
    <property type="match status" value="1"/>
</dbReference>
<dbReference type="Pfam" id="PF03328">
    <property type="entry name" value="HpcH_HpaI"/>
    <property type="match status" value="1"/>
</dbReference>
<dbReference type="SUPFAM" id="SSF51621">
    <property type="entry name" value="Phosphoenolpyruvate/pyruvate domain"/>
    <property type="match status" value="1"/>
</dbReference>
<sequence length="268" mass="28203">MDLPVNRFKQRLRSGEAQIGLWLGLADPYCAELAANAGFDWLLLDGEHAPNDLRSLLGQLQALAPYPGQPVIRPVQGDTALIKQLLDIGAQTLLVPMVDSAAQAEGLVRAVRYPPAGVRGVGSALARASRWNSVAEYLNHADEQMCLLVQVENLEGLANLDAIAAVEGVDGVFIGPADLSAAMGHRGNPGHPEVQAAIEDAIHRIRTAGKAAGILSADETLARRYLELGCAFVAVGVDTSLLMRSLRELAGRFKGGAPAPSASSSVYG</sequence>
<comment type="function">
    <text evidence="2">Aldolase which can catalyze in vitro the aldolisation reaction between hydroxypyruvate (HPA) or pyruvate (PA) and D-glyceraldehyde (D-GA) (Ref.1). The condensation of hydroxypyruvate and D-glyceraldehyde produces (3R,4S,5R)-3,4,5,6-tetrahydroxy-2-oxohexanoate as the major product, 2-dehydro-D-gluconate and 2-dehydro-D-galactonate (Ref.1). The condensation of pyruvate and D-glyceraldehyde produces 2-dehydro-3-deoxy-L-galactonate as the major product and 2-dehydro-3-deoxy-D-gluconate (Ref.1). Also catalyzes the retro-aldol type decarboxylation of oxaloacetate, a general property of known pyruvate aldolases (Ref.1).</text>
</comment>
<comment type="catalytic activity">
    <reaction evidence="2">
        <text>D-glyceraldehyde + 3-hydroxypyruvate = (3R,4S,5R)-3,4,5,6-tetrahydroxy-2-oxohexanoate</text>
        <dbReference type="Rhea" id="RHEA:80047"/>
        <dbReference type="ChEBI" id="CHEBI:17180"/>
        <dbReference type="ChEBI" id="CHEBI:17378"/>
        <dbReference type="ChEBI" id="CHEBI:231434"/>
    </reaction>
</comment>
<comment type="catalytic activity">
    <reaction evidence="2">
        <text>D-glyceraldehyde + 3-hydroxypyruvate = 2-dehydro-D-gluconate</text>
        <dbReference type="Rhea" id="RHEA:80043"/>
        <dbReference type="ChEBI" id="CHEBI:16808"/>
        <dbReference type="ChEBI" id="CHEBI:17180"/>
        <dbReference type="ChEBI" id="CHEBI:17378"/>
    </reaction>
</comment>
<comment type="catalytic activity">
    <reaction evidence="2">
        <text>D-glyceraldehyde + 3-hydroxypyruvate = 2-dehydro-D-galactonate</text>
        <dbReference type="Rhea" id="RHEA:80051"/>
        <dbReference type="ChEBI" id="CHEBI:17180"/>
        <dbReference type="ChEBI" id="CHEBI:17378"/>
        <dbReference type="ChEBI" id="CHEBI:28023"/>
    </reaction>
</comment>
<comment type="catalytic activity">
    <reaction evidence="2">
        <text>D-glyceraldehyde + pyruvate = 2-dehydro-3-deoxy-L-galactonate</text>
        <dbReference type="Rhea" id="RHEA:80055"/>
        <dbReference type="ChEBI" id="CHEBI:15361"/>
        <dbReference type="ChEBI" id="CHEBI:17378"/>
        <dbReference type="ChEBI" id="CHEBI:75545"/>
    </reaction>
</comment>
<comment type="catalytic activity">
    <reaction evidence="2">
        <text>2-dehydro-3-deoxy-D-gluconate = D-glyceraldehyde + pyruvate</text>
        <dbReference type="Rhea" id="RHEA:35583"/>
        <dbReference type="ChEBI" id="CHEBI:15361"/>
        <dbReference type="ChEBI" id="CHEBI:17378"/>
        <dbReference type="ChEBI" id="CHEBI:57990"/>
    </reaction>
</comment>
<comment type="cofactor">
    <cofactor evidence="2">
        <name>Mn(2+)</name>
        <dbReference type="ChEBI" id="CHEBI:29035"/>
    </cofactor>
    <cofactor evidence="2">
        <name>Mg(2+)</name>
        <dbReference type="ChEBI" id="CHEBI:18420"/>
    </cofactor>
    <cofactor evidence="2">
        <name>Co(2+)</name>
        <dbReference type="ChEBI" id="CHEBI:48828"/>
    </cofactor>
    <text evidence="2">Shows a slight preference for Mn(2+).</text>
</comment>
<comment type="similarity">
    <text evidence="4">Belongs to the HpcH/HpaI aldolase family.</text>
</comment>
<feature type="chain" id="PRO_0000460955" description="Hydroxypyruvate/pyruvate aldolase">
    <location>
        <begin position="1"/>
        <end position="268"/>
    </location>
</feature>
<feature type="active site" description="Proton acceptor" evidence="1">
    <location>
        <position position="48"/>
    </location>
</feature>
<feature type="binding site" evidence="1">
    <location>
        <position position="152"/>
    </location>
    <ligand>
        <name>a divalent metal cation</name>
        <dbReference type="ChEBI" id="CHEBI:60240"/>
    </ligand>
</feature>
<feature type="binding site" evidence="1">
    <location>
        <position position="178"/>
    </location>
    <ligand>
        <name>a divalent metal cation</name>
        <dbReference type="ChEBI" id="CHEBI:60240"/>
    </ligand>
</feature>
<feature type="site" description="Transition state stabilizer" evidence="1">
    <location>
        <position position="73"/>
    </location>
</feature>
<feature type="site" description="Increases basicity of active site His" evidence="1">
    <location>
        <position position="87"/>
    </location>
</feature>
<feature type="helix" evidence="9">
    <location>
        <begin position="7"/>
        <end position="13"/>
    </location>
</feature>
<feature type="strand" evidence="9">
    <location>
        <begin position="14"/>
        <end position="16"/>
    </location>
</feature>
<feature type="strand" evidence="9">
    <location>
        <begin position="18"/>
        <end position="23"/>
    </location>
</feature>
<feature type="helix" evidence="9">
    <location>
        <begin position="28"/>
        <end position="35"/>
    </location>
</feature>
<feature type="turn" evidence="9">
    <location>
        <begin position="36"/>
        <end position="38"/>
    </location>
</feature>
<feature type="strand" evidence="9">
    <location>
        <begin position="40"/>
        <end position="50"/>
    </location>
</feature>
<feature type="helix" evidence="9">
    <location>
        <begin position="53"/>
        <end position="63"/>
    </location>
</feature>
<feature type="strand" evidence="9">
    <location>
        <begin position="66"/>
        <end position="73"/>
    </location>
</feature>
<feature type="helix" evidence="9">
    <location>
        <begin position="79"/>
        <end position="87"/>
    </location>
</feature>
<feature type="strand" evidence="9">
    <location>
        <begin position="92"/>
        <end position="95"/>
    </location>
</feature>
<feature type="helix" evidence="9">
    <location>
        <begin position="101"/>
        <end position="110"/>
    </location>
</feature>
<feature type="turn" evidence="9">
    <location>
        <begin position="114"/>
        <end position="116"/>
    </location>
</feature>
<feature type="helix" evidence="9">
    <location>
        <begin position="123"/>
        <end position="125"/>
    </location>
</feature>
<feature type="helix" evidence="9">
    <location>
        <begin position="127"/>
        <end position="129"/>
    </location>
</feature>
<feature type="turn" evidence="9">
    <location>
        <begin position="130"/>
        <end position="133"/>
    </location>
</feature>
<feature type="helix" evidence="9">
    <location>
        <begin position="137"/>
        <end position="140"/>
    </location>
</feature>
<feature type="helix" evidence="9">
    <location>
        <begin position="141"/>
        <end position="144"/>
    </location>
</feature>
<feature type="strand" evidence="9">
    <location>
        <begin position="146"/>
        <end position="151"/>
    </location>
</feature>
<feature type="helix" evidence="9">
    <location>
        <begin position="154"/>
        <end position="158"/>
    </location>
</feature>
<feature type="helix" evidence="9">
    <location>
        <begin position="160"/>
        <end position="165"/>
    </location>
</feature>
<feature type="strand" evidence="9">
    <location>
        <begin position="169"/>
        <end position="174"/>
    </location>
</feature>
<feature type="helix" evidence="9">
    <location>
        <begin position="176"/>
        <end position="182"/>
    </location>
</feature>
<feature type="helix" evidence="9">
    <location>
        <begin position="192"/>
        <end position="207"/>
    </location>
</feature>
<feature type="strand" evidence="9">
    <location>
        <begin position="211"/>
        <end position="215"/>
    </location>
</feature>
<feature type="helix" evidence="9">
    <location>
        <begin position="219"/>
        <end position="227"/>
    </location>
</feature>
<feature type="strand" evidence="9">
    <location>
        <begin position="231"/>
        <end position="237"/>
    </location>
</feature>
<feature type="helix" evidence="9">
    <location>
        <begin position="238"/>
        <end position="253"/>
    </location>
</feature>
<name>HPAAL_PSEAI</name>
<proteinExistence type="evidence at protein level"/>
<organism>
    <name type="scientific">Pseudomonas aeruginosa</name>
    <dbReference type="NCBI Taxonomy" id="287"/>
    <lineage>
        <taxon>Bacteria</taxon>
        <taxon>Pseudomonadati</taxon>
        <taxon>Pseudomonadota</taxon>
        <taxon>Gammaproteobacteria</taxon>
        <taxon>Pseudomonadales</taxon>
        <taxon>Pseudomonadaceae</taxon>
        <taxon>Pseudomonas</taxon>
    </lineage>
</organism>
<evidence type="ECO:0000250" key="1">
    <source>
        <dbReference type="UniProtKB" id="Q47098"/>
    </source>
</evidence>
<evidence type="ECO:0000269" key="2">
    <source ref="1"/>
</evidence>
<evidence type="ECO:0000303" key="3">
    <source ref="1"/>
</evidence>
<evidence type="ECO:0000305" key="4"/>
<evidence type="ECO:0000312" key="5">
    <source>
        <dbReference type="EMBL" id="CEP14691.1"/>
    </source>
</evidence>
<evidence type="ECO:0000312" key="6">
    <source>
        <dbReference type="EMBL" id="CRO41772.1"/>
    </source>
</evidence>
<evidence type="ECO:0000312" key="7">
    <source>
        <dbReference type="EMBL" id="RPM09126.1"/>
    </source>
</evidence>
<evidence type="ECO:0007744" key="8">
    <source>
        <dbReference type="PDB" id="7V8T"/>
    </source>
</evidence>
<evidence type="ECO:0007829" key="9">
    <source>
        <dbReference type="PDB" id="7V8T"/>
    </source>
</evidence>
<keyword id="KW-0002">3D-structure</keyword>
<keyword id="KW-0170">Cobalt</keyword>
<keyword id="KW-0456">Lyase</keyword>
<keyword id="KW-0460">Magnesium</keyword>
<keyword id="KW-0464">Manganese</keyword>
<keyword id="KW-0479">Metal-binding</keyword>
<keyword id="KW-0670">Pyruvate</keyword>
<gene>
    <name evidence="5" type="primary">PA50071_1</name>
    <name evidence="7" type="ORF">IPC1295_24755</name>
    <name evidence="6" type="ORF">PAERUG_P19_London_7_VIM_2_05_10_01569</name>
</gene>
<accession>A0A081HJP9</accession>